<feature type="chain" id="PRO_0000249322" description="Nucleosome-remodeling factor subunit NURF301">
    <location>
        <begin position="1"/>
        <end position="2669"/>
    </location>
</feature>
<feature type="domain" description="DDT" evidence="4">
    <location>
        <begin position="188"/>
        <end position="248"/>
    </location>
</feature>
<feature type="domain" description="Bromo" evidence="3">
    <location>
        <begin position="2556"/>
        <end position="2660"/>
    </location>
</feature>
<feature type="DNA-binding region" description="A.T hook">
    <location>
        <begin position="6"/>
        <end position="18"/>
    </location>
</feature>
<feature type="zinc finger region" description="PHD-type 1" evidence="5">
    <location>
        <begin position="339"/>
        <end position="386"/>
    </location>
</feature>
<feature type="zinc finger region" description="PHD-type 2" evidence="5">
    <location>
        <begin position="2481"/>
        <end position="2546"/>
    </location>
</feature>
<feature type="region of interest" description="Disordered" evidence="6">
    <location>
        <begin position="1"/>
        <end position="125"/>
    </location>
</feature>
<feature type="region of interest" description="Required for function in nucleosome sliding">
    <location>
        <begin position="1"/>
        <end position="121"/>
    </location>
</feature>
<feature type="region of interest" description="Disordered" evidence="6">
    <location>
        <begin position="505"/>
        <end position="538"/>
    </location>
</feature>
<feature type="region of interest" description="Disordered" evidence="6">
    <location>
        <begin position="1026"/>
        <end position="1048"/>
    </location>
</feature>
<feature type="region of interest" description="Disordered" evidence="6">
    <location>
        <begin position="1135"/>
        <end position="1159"/>
    </location>
</feature>
<feature type="region of interest" description="Disordered" evidence="6">
    <location>
        <begin position="1406"/>
        <end position="1425"/>
    </location>
</feature>
<feature type="region of interest" description="Disordered" evidence="6">
    <location>
        <begin position="1559"/>
        <end position="1596"/>
    </location>
</feature>
<feature type="region of interest" description="Disordered" evidence="6">
    <location>
        <begin position="2181"/>
        <end position="2203"/>
    </location>
</feature>
<feature type="region of interest" description="Disordered" evidence="6">
    <location>
        <begin position="2283"/>
        <end position="2307"/>
    </location>
</feature>
<feature type="region of interest" description="Disordered" evidence="6">
    <location>
        <begin position="2382"/>
        <end position="2432"/>
    </location>
</feature>
<feature type="coiled-coil region" evidence="2">
    <location>
        <begin position="460"/>
        <end position="515"/>
    </location>
</feature>
<feature type="coiled-coil region" evidence="2">
    <location>
        <begin position="688"/>
        <end position="720"/>
    </location>
</feature>
<feature type="coiled-coil region" evidence="2">
    <location>
        <begin position="2338"/>
        <end position="2373"/>
    </location>
</feature>
<feature type="compositionally biased region" description="Basic residues" evidence="6">
    <location>
        <begin position="1"/>
        <end position="12"/>
    </location>
</feature>
<feature type="compositionally biased region" description="Polar residues" evidence="6">
    <location>
        <begin position="38"/>
        <end position="56"/>
    </location>
</feature>
<feature type="compositionally biased region" description="Basic residues" evidence="6">
    <location>
        <begin position="66"/>
        <end position="82"/>
    </location>
</feature>
<feature type="compositionally biased region" description="Acidic residues" evidence="6">
    <location>
        <begin position="109"/>
        <end position="125"/>
    </location>
</feature>
<feature type="compositionally biased region" description="Basic and acidic residues" evidence="6">
    <location>
        <begin position="528"/>
        <end position="537"/>
    </location>
</feature>
<feature type="compositionally biased region" description="Low complexity" evidence="6">
    <location>
        <begin position="1559"/>
        <end position="1590"/>
    </location>
</feature>
<feature type="compositionally biased region" description="Polar residues" evidence="6">
    <location>
        <begin position="2283"/>
        <end position="2293"/>
    </location>
</feature>
<feature type="compositionally biased region" description="Basic and acidic residues" evidence="6">
    <location>
        <begin position="2404"/>
        <end position="2419"/>
    </location>
</feature>
<feature type="site" description="Histone H3K4me3 binding" evidence="1">
    <location>
        <position position="2497"/>
    </location>
</feature>
<feature type="site" description="Histone H3K4me3 binding" evidence="1">
    <location>
        <position position="2504"/>
    </location>
</feature>
<feature type="site" description="Histone H3K4me3 binding" evidence="1">
    <location>
        <position position="2510"/>
    </location>
</feature>
<feature type="site" description="Histone H3K4me3 binding" evidence="1">
    <location>
        <position position="2519"/>
    </location>
</feature>
<feature type="modified residue" description="Phosphoserine" evidence="11">
    <location>
        <position position="40"/>
    </location>
</feature>
<feature type="modified residue" description="Phosphoserine" evidence="11">
    <location>
        <position position="52"/>
    </location>
</feature>
<feature type="modified residue" description="Phosphoserine" evidence="11">
    <location>
        <position position="55"/>
    </location>
</feature>
<feature type="modified residue" description="Phosphoserine" evidence="11">
    <location>
        <position position="59"/>
    </location>
</feature>
<feature type="modified residue" description="Phosphoserine" evidence="11">
    <location>
        <position position="62"/>
    </location>
</feature>
<feature type="modified residue" description="Phosphoserine" evidence="11">
    <location>
        <position position="1417"/>
    </location>
</feature>
<feature type="modified residue" description="Phosphothreonine" evidence="11">
    <location>
        <position position="1527"/>
    </location>
</feature>
<feature type="modified residue" description="Phosphoserine" evidence="11">
    <location>
        <position position="2395"/>
    </location>
</feature>
<feature type="modified residue" description="Phosphoserine" evidence="11">
    <location>
        <position position="2398"/>
    </location>
</feature>
<feature type="modified residue" description="Phosphoserine" evidence="11">
    <location>
        <position position="2403"/>
    </location>
</feature>
<feature type="splice variant" id="VSP_020422" description="In isoform B and isoform D." evidence="13">
    <location>
        <begin position="1800"/>
        <end position="1819"/>
    </location>
</feature>
<feature type="splice variant" id="VSP_020423" description="In isoform C and isoform D." evidence="13">
    <original>TNNI</original>
    <variation>VSSF</variation>
    <location>
        <begin position="2156"/>
        <end position="2159"/>
    </location>
</feature>
<feature type="splice variant" id="VSP_020424" description="In isoform C and isoform D." evidence="13">
    <location>
        <begin position="2160"/>
        <end position="2669"/>
    </location>
</feature>
<feature type="sequence conflict" description="In Ref. 1; AAL16644." evidence="14" ref="1">
    <original>D</original>
    <variation>Y</variation>
    <location>
        <position position="307"/>
    </location>
</feature>
<feature type="sequence conflict" description="In Ref. 1; AAL16644." evidence="14" ref="1">
    <original>T</original>
    <variation>A</variation>
    <location>
        <position position="2156"/>
    </location>
</feature>
<feature type="sequence conflict" description="In Ref. 1; AAL16644." evidence="14" ref="1">
    <original>S</original>
    <variation>A</variation>
    <location>
        <position position="2252"/>
    </location>
</feature>
<gene>
    <name type="primary">E(bx)</name>
    <name type="ORF">CG32346</name>
    <name type="ORF">CG7022</name>
    <name type="ORF">Nurf301</name>
</gene>
<sequence length="2669" mass="300686">MSGRGSRKRGRPPKTPNERASGRFNYQLLKKPKYLSEGKSQPSTPSASRGISPQSDEGSRSSHNNHTNRSRGSAAKRGRGRKSAVQPNTSSYSGRKGYESEYHYGSDFGDSEEDKSDNEDDMLLTPSDDESLEVANESESEFSVCSFNQNGVGRPPRPPSPEPVWLQEGRQYAALDLPDSSEDLFIANTHVLRALSIYEVLRRFRHMVRLSPFRFEDLCAALACEEQSALLTEVHIMLLKAILREEDAQGTHFGPLDQKDTVNISLYLIDSITWPEVLRSYVESDKTFDRNVFHILSHTEYPYTGIDNRLEVLQFLSDQFLTSNSIRDVMLQEGPIHYDDHCRVCHRLGDLLCCETCPAVYHLECVDPPMNDVPTEDWQCGLCRSHKVSGVVDCVLPQEKQGVLIRHDSLGVDRHGRKYWFIARRIFIEDQENFTCWYYSTTSKLKLLLSRLDAEELETRLHSQITERRDEIERQMKLTETLTNEHKHTKRSVIEIEQEAKNELLEKEVLDEDEKDGDAKSESQSIEGTKKQEECKMVTRQKSNQLTNGTLHFKLGMEQGFKNYVNQYSTNPIALNKPQRNEERDKRRHLSHKFSLTTASDFKWIGITMGTTDNMITTLRQTLINFESNIAASFLNINWVVNKKIWNAAVMNARRPSEFAVVLLLFQASLKSVVFANVWHEQLGHTTLQRITSAEREERKKLEKREKRERDDEEERNRLAFNYIKYTLGLKHQVWKQKGEEYRVHGQWGWLWLSSSRRCGVRARRAQPLTHNRVYVHYTMGEENDVNEIILVDPRTQRFMQQCESSNVDGQVCHYLPDQYKNVKVIEDVTEKIKGHIDVSKALNAPGRTYYSKVARKSRLDDLLDRRLKLAEVEEQMASKIPSDMKPLLVSSQNNTANSKQTFLEKRLLRLTEVQAKGGPANVNLELVNSLAKQIQTVRLQFSQLNRFAKVFRCYTKECNTNSNAVSQITQNTCYSPLCLQKARAKKELLLLLRKAHTAGNGSKETVAAILGAVKKPSILEQKLTEGKRESTQVAVDDSEEGKPAESEAPLDLLQDWEHARAHAVPFSDSLLTECILVDQECVTNTKIKQEVNASSGCNTTPDSNTQDSDKIDYIESMDVCSNVEIESTEDSIVTGLNSGNAEDVDMTPGWRRKRNQKSKKSYIGTKDVLDQTLDKDIPLNKQNRRFPITARPVKRECVKKYERETFENGNERVYSTSSPRGRVYLLNDAAKLYEQAVKTEDKSTITKKPSYSRYPLISNFLTHKKKRSLLVLPRFELLKLARLGGKSSTNGFHHAAKNNTIWQYQCSRPLFRTCWSYRTSNATSLSSLALQLRILWSCLRWDDMIAKPPSTDGKHQVTTDTEIVTLELLKLRHSGRYGEKTSYLRRKVVIPLEMPKTVREVTSIRSGLRKRKRAESPQPTEPQITEEWVDEDKLELWEIKFMGEKQEKARLSAVTRSVASRQLEASGSNGSNTSTNGALGVAGRVQLAPKLSEDVKEKMEQQLKLQRAVHQQRKLVATGEITRSVTPVKGQVIGSRRVIVKNPDGTTRIIQQAVTQVSRTGGANTAAAAASPTVGGSTSTQSNPSTSTPHKVQIIRGPDGKVSVRGLNPGQQLVQMPDGKLHVLTTTTSSNSAGQGNKMKVPIKPASTSSSPAISSAQTTTNPVTPVIKQIAVKHVTKNSATQSIASSSRVALPLAQIKNKLLLAQQQQQSTSSSPATSSSPVQKIVSKVVNTSTSGQTLQQVFVQSGSKLVVGQNAQGQKVIISTSAAQQQGTSPVQQQQLVQSQPIQQSPQQISMTQVGNQPTQKVIQQIVNTSNVQQQIVVGGQRIILSPGQTIVTQRNVPQSQALQMVQQQIQTQQQQQQHHVVQPQQQFVVQSNQIVQSSPSAQTKLVKQLVVQQQSQQTIEEKTQITTTDSNETGTQQVLVPNSTLAQQLAQGKLQVATVNGQQVIVKPLGNNQAQIVAHIKHQGDGNAHIVTSNSATAVPQANPQTSPVKQQALPPQSPQQVVVQQQQIHQQSPTNFESGVTPITQQPVLTQAVQAPAQQQALSVEESLLQNQPPGTVIKCVTAQVLQTEHGPRIVLQGLVGNDFTAQQLQLVQTQVKQQLMKAQESNGKLGVLGPTKIYLAVQPENAVQSQPPPLTPVHQSAAHQQTNNIEIDADTLATTYEANSTIKDIAINNGDDQENSKCAETENSNITTNESFAGTSSLLEGSEHDEPTNLAGLDISETDLENKQNESFVVTRGYIQKSISNALKQGNLSPELEEKLVCMQKQQENANSTNEWETCSRGSVNEEALTPSRQTDDTEWKIRTSLRRPNAMTTSSQFNRILKKNRSKNDEVAELGEQKQSQLERHKELLKKNILRKRSLLERNLQSEIHEDVKTKVQRHVRPLSNASPDEQSENERSGEPNLDFKRTEVQNPRHGAGRPKKLTRKKEKLYCICRTPYDDTKFYVGCDLCSNWFHGDCVSITEEASKKLSEFICIDCKRARETQQLYCSCRQPYDESQFYICCDKCQDWFHGRCVGILQSEAEFIDEYVCPECQRKNDANAANMKKLTSNDVEELKNLIKQMQLHKSAWPFMEPVDPKEAPDYYKVIKEPMDLKRMEIKLESNTYTKLSEFIGDMTKIFDNCRYYNPKESSFYKCAEALESYFVQKIKNFRENVFDQRT</sequence>
<name>NU301_DROME</name>
<reference key="1">
    <citation type="journal article" date="2001" name="Mol. Cell">
        <title>Dual functions of largest NURF subunit NURF301 in nucleosome sliding and transcription factor interactions.</title>
        <authorList>
            <person name="Xiao H."/>
            <person name="Sandaltzopoulos R."/>
            <person name="Wang H.-M."/>
            <person name="Hamiche A."/>
            <person name="Ranallo R."/>
            <person name="Lee K.-M."/>
            <person name="Fu D."/>
            <person name="Wu C."/>
        </authorList>
    </citation>
    <scope>NUCLEOTIDE SEQUENCE [MRNA] (ISOFORM A)</scope>
    <scope>PROTEIN SEQUENCE OF 172-179; 195-202; 508-516; 594-603; 673-678; 1186-1192; 1233-1239; 1249-1254; 1561-1578; 1622-1639; 1731-1751 AND 1911-1937</scope>
    <scope>IDENTIFICATION IN THE NURF COMPLEX</scope>
    <scope>FUNCTION</scope>
    <scope>INTERACTION WITH TRL</scope>
</reference>
<reference key="2">
    <citation type="journal article" date="2000" name="Science">
        <title>The genome sequence of Drosophila melanogaster.</title>
        <authorList>
            <person name="Adams M.D."/>
            <person name="Celniker S.E."/>
            <person name="Holt R.A."/>
            <person name="Evans C.A."/>
            <person name="Gocayne J.D."/>
            <person name="Amanatides P.G."/>
            <person name="Scherer S.E."/>
            <person name="Li P.W."/>
            <person name="Hoskins R.A."/>
            <person name="Galle R.F."/>
            <person name="George R.A."/>
            <person name="Lewis S.E."/>
            <person name="Richards S."/>
            <person name="Ashburner M."/>
            <person name="Henderson S.N."/>
            <person name="Sutton G.G."/>
            <person name="Wortman J.R."/>
            <person name="Yandell M.D."/>
            <person name="Zhang Q."/>
            <person name="Chen L.X."/>
            <person name="Brandon R.C."/>
            <person name="Rogers Y.-H.C."/>
            <person name="Blazej R.G."/>
            <person name="Champe M."/>
            <person name="Pfeiffer B.D."/>
            <person name="Wan K.H."/>
            <person name="Doyle C."/>
            <person name="Baxter E.G."/>
            <person name="Helt G."/>
            <person name="Nelson C.R."/>
            <person name="Miklos G.L.G."/>
            <person name="Abril J.F."/>
            <person name="Agbayani A."/>
            <person name="An H.-J."/>
            <person name="Andrews-Pfannkoch C."/>
            <person name="Baldwin D."/>
            <person name="Ballew R.M."/>
            <person name="Basu A."/>
            <person name="Baxendale J."/>
            <person name="Bayraktaroglu L."/>
            <person name="Beasley E.M."/>
            <person name="Beeson K.Y."/>
            <person name="Benos P.V."/>
            <person name="Berman B.P."/>
            <person name="Bhandari D."/>
            <person name="Bolshakov S."/>
            <person name="Borkova D."/>
            <person name="Botchan M.R."/>
            <person name="Bouck J."/>
            <person name="Brokstein P."/>
            <person name="Brottier P."/>
            <person name="Burtis K.C."/>
            <person name="Busam D.A."/>
            <person name="Butler H."/>
            <person name="Cadieu E."/>
            <person name="Center A."/>
            <person name="Chandra I."/>
            <person name="Cherry J.M."/>
            <person name="Cawley S."/>
            <person name="Dahlke C."/>
            <person name="Davenport L.B."/>
            <person name="Davies P."/>
            <person name="de Pablos B."/>
            <person name="Delcher A."/>
            <person name="Deng Z."/>
            <person name="Mays A.D."/>
            <person name="Dew I."/>
            <person name="Dietz S.M."/>
            <person name="Dodson K."/>
            <person name="Doup L.E."/>
            <person name="Downes M."/>
            <person name="Dugan-Rocha S."/>
            <person name="Dunkov B.C."/>
            <person name="Dunn P."/>
            <person name="Durbin K.J."/>
            <person name="Evangelista C.C."/>
            <person name="Ferraz C."/>
            <person name="Ferriera S."/>
            <person name="Fleischmann W."/>
            <person name="Fosler C."/>
            <person name="Gabrielian A.E."/>
            <person name="Garg N.S."/>
            <person name="Gelbart W.M."/>
            <person name="Glasser K."/>
            <person name="Glodek A."/>
            <person name="Gong F."/>
            <person name="Gorrell J.H."/>
            <person name="Gu Z."/>
            <person name="Guan P."/>
            <person name="Harris M."/>
            <person name="Harris N.L."/>
            <person name="Harvey D.A."/>
            <person name="Heiman T.J."/>
            <person name="Hernandez J.R."/>
            <person name="Houck J."/>
            <person name="Hostin D."/>
            <person name="Houston K.A."/>
            <person name="Howland T.J."/>
            <person name="Wei M.-H."/>
            <person name="Ibegwam C."/>
            <person name="Jalali M."/>
            <person name="Kalush F."/>
            <person name="Karpen G.H."/>
            <person name="Ke Z."/>
            <person name="Kennison J.A."/>
            <person name="Ketchum K.A."/>
            <person name="Kimmel B.E."/>
            <person name="Kodira C.D."/>
            <person name="Kraft C.L."/>
            <person name="Kravitz S."/>
            <person name="Kulp D."/>
            <person name="Lai Z."/>
            <person name="Lasko P."/>
            <person name="Lei Y."/>
            <person name="Levitsky A.A."/>
            <person name="Li J.H."/>
            <person name="Li Z."/>
            <person name="Liang Y."/>
            <person name="Lin X."/>
            <person name="Liu X."/>
            <person name="Mattei B."/>
            <person name="McIntosh T.C."/>
            <person name="McLeod M.P."/>
            <person name="McPherson D."/>
            <person name="Merkulov G."/>
            <person name="Milshina N.V."/>
            <person name="Mobarry C."/>
            <person name="Morris J."/>
            <person name="Moshrefi A."/>
            <person name="Mount S.M."/>
            <person name="Moy M."/>
            <person name="Murphy B."/>
            <person name="Murphy L."/>
            <person name="Muzny D.M."/>
            <person name="Nelson D.L."/>
            <person name="Nelson D.R."/>
            <person name="Nelson K.A."/>
            <person name="Nixon K."/>
            <person name="Nusskern D.R."/>
            <person name="Pacleb J.M."/>
            <person name="Palazzolo M."/>
            <person name="Pittman G.S."/>
            <person name="Pan S."/>
            <person name="Pollard J."/>
            <person name="Puri V."/>
            <person name="Reese M.G."/>
            <person name="Reinert K."/>
            <person name="Remington K."/>
            <person name="Saunders R.D.C."/>
            <person name="Scheeler F."/>
            <person name="Shen H."/>
            <person name="Shue B.C."/>
            <person name="Siden-Kiamos I."/>
            <person name="Simpson M."/>
            <person name="Skupski M.P."/>
            <person name="Smith T.J."/>
            <person name="Spier E."/>
            <person name="Spradling A.C."/>
            <person name="Stapleton M."/>
            <person name="Strong R."/>
            <person name="Sun E."/>
            <person name="Svirskas R."/>
            <person name="Tector C."/>
            <person name="Turner R."/>
            <person name="Venter E."/>
            <person name="Wang A.H."/>
            <person name="Wang X."/>
            <person name="Wang Z.-Y."/>
            <person name="Wassarman D.A."/>
            <person name="Weinstock G.M."/>
            <person name="Weissenbach J."/>
            <person name="Williams S.M."/>
            <person name="Woodage T."/>
            <person name="Worley K.C."/>
            <person name="Wu D."/>
            <person name="Yang S."/>
            <person name="Yao Q.A."/>
            <person name="Ye J."/>
            <person name="Yeh R.-F."/>
            <person name="Zaveri J.S."/>
            <person name="Zhan M."/>
            <person name="Zhang G."/>
            <person name="Zhao Q."/>
            <person name="Zheng L."/>
            <person name="Zheng X.H."/>
            <person name="Zhong F.N."/>
            <person name="Zhong W."/>
            <person name="Zhou X."/>
            <person name="Zhu S.C."/>
            <person name="Zhu X."/>
            <person name="Smith H.O."/>
            <person name="Gibbs R.A."/>
            <person name="Myers E.W."/>
            <person name="Rubin G.M."/>
            <person name="Venter J.C."/>
        </authorList>
    </citation>
    <scope>NUCLEOTIDE SEQUENCE [LARGE SCALE GENOMIC DNA]</scope>
    <source>
        <strain>Berkeley</strain>
    </source>
</reference>
<reference key="3">
    <citation type="journal article" date="2002" name="Genome Biol.">
        <title>Annotation of the Drosophila melanogaster euchromatic genome: a systematic review.</title>
        <authorList>
            <person name="Misra S."/>
            <person name="Crosby M.A."/>
            <person name="Mungall C.J."/>
            <person name="Matthews B.B."/>
            <person name="Campbell K.S."/>
            <person name="Hradecky P."/>
            <person name="Huang Y."/>
            <person name="Kaminker J.S."/>
            <person name="Millburn G.H."/>
            <person name="Prochnik S.E."/>
            <person name="Smith C.D."/>
            <person name="Tupy J.L."/>
            <person name="Whitfield E.J."/>
            <person name="Bayraktaroglu L."/>
            <person name="Berman B.P."/>
            <person name="Bettencourt B.R."/>
            <person name="Celniker S.E."/>
            <person name="de Grey A.D.N.J."/>
            <person name="Drysdale R.A."/>
            <person name="Harris N.L."/>
            <person name="Richter J."/>
            <person name="Russo S."/>
            <person name="Schroeder A.J."/>
            <person name="Shu S.Q."/>
            <person name="Stapleton M."/>
            <person name="Yamada C."/>
            <person name="Ashburner M."/>
            <person name="Gelbart W.M."/>
            <person name="Rubin G.M."/>
            <person name="Lewis S.E."/>
        </authorList>
    </citation>
    <scope>GENOME REANNOTATION</scope>
    <scope>ALTERNATIVE SPLICING</scope>
    <source>
        <strain>Berkeley</strain>
    </source>
</reference>
<reference key="4">
    <citation type="journal article" date="2002" name="Genome Biol.">
        <title>A Drosophila full-length cDNA resource.</title>
        <authorList>
            <person name="Stapleton M."/>
            <person name="Carlson J.W."/>
            <person name="Brokstein P."/>
            <person name="Yu C."/>
            <person name="Champe M."/>
            <person name="George R.A."/>
            <person name="Guarin H."/>
            <person name="Kronmiller B."/>
            <person name="Pacleb J.M."/>
            <person name="Park S."/>
            <person name="Wan K.H."/>
            <person name="Rubin G.M."/>
            <person name="Celniker S.E."/>
        </authorList>
    </citation>
    <scope>NUCLEOTIDE SEQUENCE [LARGE SCALE MRNA] OF 1-701 AND 1029-2669 (ISOFORM D)</scope>
    <source>
        <strain>Berkeley</strain>
        <tissue>Embryo</tissue>
    </source>
</reference>
<reference key="5">
    <citation type="journal article" date="1995" name="Cell">
        <title>Purification and properties of an ATP-dependent nucleosome remodeling factor.</title>
        <authorList>
            <person name="Tsukiyama T."/>
            <person name="Wu C."/>
        </authorList>
    </citation>
    <scope>FUNCTION</scope>
</reference>
<reference key="6">
    <citation type="journal article" date="2002" name="Genes Dev.">
        <title>Biological functions of the ISWI chromatin remodeling complex NURF.</title>
        <authorList>
            <person name="Badenhorst P."/>
            <person name="Voas M."/>
            <person name="Rebay I."/>
            <person name="Wu C."/>
        </authorList>
    </citation>
    <scope>FUNCTION</scope>
</reference>
<reference key="7">
    <citation type="journal article" date="2005" name="Genes Dev.">
        <title>The Drosophila nucleosome remodeling factor NURF is required for Ecdysteroid signaling and metamorphosis.</title>
        <authorList>
            <person name="Badenhorst P."/>
            <person name="Xiao H."/>
            <person name="Cherbas L."/>
            <person name="Kwon S.Y."/>
            <person name="Voas M."/>
            <person name="Rebay I."/>
            <person name="Cherbas P."/>
            <person name="Wu C."/>
        </authorList>
    </citation>
    <scope>FUNCTION</scope>
</reference>
<reference key="8">
    <citation type="journal article" date="2006" name="Nature">
        <title>A PHD finger of NURF couples histone H3 lysine 4 trimethylation with chromatin remodelling.</title>
        <authorList>
            <person name="Wysocka J."/>
            <person name="Swigut T."/>
            <person name="Xiao H."/>
            <person name="Milne T.A."/>
            <person name="Kwon S.Y."/>
            <person name="Landry J."/>
            <person name="Kauer M."/>
            <person name="Tackett A.J."/>
            <person name="Chait B.T."/>
            <person name="Badenhorst P."/>
            <person name="Wu C."/>
            <person name="Allis C.D."/>
        </authorList>
    </citation>
    <scope>INTERACTION WITH HISTONE H3K4ME3</scope>
</reference>
<reference key="9">
    <citation type="journal article" date="2008" name="J. Proteome Res.">
        <title>Phosphoproteome analysis of Drosophila melanogaster embryos.</title>
        <authorList>
            <person name="Zhai B."/>
            <person name="Villen J."/>
            <person name="Beausoleil S.A."/>
            <person name="Mintseris J."/>
            <person name="Gygi S.P."/>
        </authorList>
    </citation>
    <scope>PHOSPHORYLATION [LARGE SCALE ANALYSIS] AT SER-40; SER-52; SER-55; SER-59; SER-62; SER-1417; THR-1527; SER-2395; SER-2398 AND SER-2403</scope>
    <scope>IDENTIFICATION BY MASS SPECTROMETRY</scope>
    <source>
        <tissue>Embryo</tissue>
    </source>
</reference>
<proteinExistence type="evidence at protein level"/>
<dbReference type="EMBL" id="AF417921">
    <property type="protein sequence ID" value="AAL16644.1"/>
    <property type="molecule type" value="mRNA"/>
</dbReference>
<dbReference type="EMBL" id="AE014296">
    <property type="protein sequence ID" value="AAN11431.1"/>
    <property type="molecule type" value="Genomic_DNA"/>
</dbReference>
<dbReference type="EMBL" id="AE014296">
    <property type="protein sequence ID" value="AAF47361.2"/>
    <property type="molecule type" value="Genomic_DNA"/>
</dbReference>
<dbReference type="EMBL" id="AE014296">
    <property type="protein sequence ID" value="AAS64922.1"/>
    <property type="molecule type" value="Genomic_DNA"/>
</dbReference>
<dbReference type="EMBL" id="AY051776">
    <property type="protein sequence ID" value="AAK93200.1"/>
    <property type="status" value="ALT_INIT"/>
    <property type="molecule type" value="mRNA"/>
</dbReference>
<dbReference type="EMBL" id="BT023142">
    <property type="protein sequence ID" value="AAY55558.1"/>
    <property type="status" value="ALT_SEQ"/>
    <property type="molecule type" value="mRNA"/>
</dbReference>
<dbReference type="EMBL" id="BT022131">
    <property type="protein sequence ID" value="AAY51526.1"/>
    <property type="status" value="ALT_SEQ"/>
    <property type="molecule type" value="mRNA"/>
</dbReference>
<dbReference type="RefSeq" id="NP_001163304.1">
    <molecule id="Q9W0T1-1"/>
    <property type="nucleotide sequence ID" value="NM_001169833.2"/>
</dbReference>
<dbReference type="RefSeq" id="NP_001163305.1">
    <molecule id="Q9W0T1-4"/>
    <property type="nucleotide sequence ID" value="NM_001169834.2"/>
</dbReference>
<dbReference type="RefSeq" id="NP_001261190.1">
    <molecule id="Q9W0T1-1"/>
    <property type="nucleotide sequence ID" value="NM_001274261.1"/>
</dbReference>
<dbReference type="RefSeq" id="NP_728505.1">
    <molecule id="Q9W0T1-2"/>
    <property type="nucleotide sequence ID" value="NM_167817.3"/>
</dbReference>
<dbReference type="RefSeq" id="NP_728507.1">
    <molecule id="Q9W0T1-1"/>
    <property type="nucleotide sequence ID" value="NM_167819.3"/>
</dbReference>
<dbReference type="RefSeq" id="NP_995946.1">
    <molecule id="Q9W0T1-3"/>
    <property type="nucleotide sequence ID" value="NM_206224.3"/>
</dbReference>
<dbReference type="SMR" id="Q9W0T1"/>
<dbReference type="BioGRID" id="69297">
    <property type="interactions" value="35"/>
</dbReference>
<dbReference type="ComplexPortal" id="CPX-2362">
    <property type="entry name" value="NuRF nucleosome remodelling factor"/>
</dbReference>
<dbReference type="FunCoup" id="Q9W0T1">
    <property type="interactions" value="2867"/>
</dbReference>
<dbReference type="IntAct" id="Q9W0T1">
    <property type="interactions" value="11"/>
</dbReference>
<dbReference type="STRING" id="7227.FBpp0304412"/>
<dbReference type="GlyGen" id="Q9W0T1">
    <property type="glycosylation" value="3 sites, 1 O-linked glycan (1 site)"/>
</dbReference>
<dbReference type="iPTMnet" id="Q9W0T1"/>
<dbReference type="PaxDb" id="7227-FBpp0304412"/>
<dbReference type="EnsemblMetazoa" id="FBtr0072521">
    <molecule id="Q9W0T1-1"/>
    <property type="protein sequence ID" value="FBpp0072421"/>
    <property type="gene ID" value="FBgn0000541"/>
</dbReference>
<dbReference type="EnsemblMetazoa" id="FBtr0072522">
    <molecule id="Q9W0T1-2"/>
    <property type="protein sequence ID" value="FBpp0072422"/>
    <property type="gene ID" value="FBgn0000541"/>
</dbReference>
<dbReference type="EnsemblMetazoa" id="FBtr0072523">
    <molecule id="Q9W0T1-3"/>
    <property type="protein sequence ID" value="FBpp0089425"/>
    <property type="gene ID" value="FBgn0000541"/>
</dbReference>
<dbReference type="EnsemblMetazoa" id="FBtr0301348">
    <molecule id="Q9W0T1-1"/>
    <property type="protein sequence ID" value="FBpp0290562"/>
    <property type="gene ID" value="FBgn0000541"/>
</dbReference>
<dbReference type="EnsemblMetazoa" id="FBtr0301349">
    <molecule id="Q9W0T1-4"/>
    <property type="protein sequence ID" value="FBpp0290563"/>
    <property type="gene ID" value="FBgn0000541"/>
</dbReference>
<dbReference type="EnsemblMetazoa" id="FBtr0332104">
    <molecule id="Q9W0T1-1"/>
    <property type="protein sequence ID" value="FBpp0304414"/>
    <property type="gene ID" value="FBgn0000541"/>
</dbReference>
<dbReference type="GeneID" id="44811"/>
<dbReference type="KEGG" id="dme:Dmel_CG32346"/>
<dbReference type="AGR" id="FB:FBgn0000541"/>
<dbReference type="CTD" id="44811"/>
<dbReference type="FlyBase" id="FBgn0000541">
    <property type="gene designation" value="E(bx)"/>
</dbReference>
<dbReference type="VEuPathDB" id="VectorBase:FBgn0000541"/>
<dbReference type="eggNOG" id="KOG1473">
    <property type="taxonomic scope" value="Eukaryota"/>
</dbReference>
<dbReference type="eggNOG" id="KOG1632">
    <property type="taxonomic scope" value="Eukaryota"/>
</dbReference>
<dbReference type="GeneTree" id="ENSGT00940000154830"/>
<dbReference type="InParanoid" id="Q9W0T1"/>
<dbReference type="OrthoDB" id="784962at2759"/>
<dbReference type="PhylomeDB" id="Q9W0T1"/>
<dbReference type="SignaLink" id="Q9W0T1"/>
<dbReference type="BioGRID-ORCS" id="44811">
    <property type="hits" value="1 hit in 1 CRISPR screen"/>
</dbReference>
<dbReference type="ChiTaRS" id="E(bx)">
    <property type="organism name" value="fly"/>
</dbReference>
<dbReference type="GenomeRNAi" id="44811"/>
<dbReference type="PRO" id="PR:Q9W0T1"/>
<dbReference type="Proteomes" id="UP000000803">
    <property type="component" value="Chromosome 3L"/>
</dbReference>
<dbReference type="Bgee" id="FBgn0000541">
    <property type="expression patterns" value="Expressed in intestinal stem cell (Drosophila) in digestive tract and 284 other cell types or tissues"/>
</dbReference>
<dbReference type="ExpressionAtlas" id="Q9W0T1">
    <property type="expression patterns" value="baseline and differential"/>
</dbReference>
<dbReference type="GO" id="GO:0005634">
    <property type="term" value="C:nucleus"/>
    <property type="evidence" value="ECO:0007005"/>
    <property type="project" value="FlyBase"/>
</dbReference>
<dbReference type="GO" id="GO:0016589">
    <property type="term" value="C:NURF complex"/>
    <property type="evidence" value="ECO:0000314"/>
    <property type="project" value="FlyBase"/>
</dbReference>
<dbReference type="GO" id="GO:0070577">
    <property type="term" value="F:lysine-acetylated histone binding"/>
    <property type="evidence" value="ECO:0000314"/>
    <property type="project" value="FlyBase"/>
</dbReference>
<dbReference type="GO" id="GO:0035064">
    <property type="term" value="F:methylated histone binding"/>
    <property type="evidence" value="ECO:0000314"/>
    <property type="project" value="FlyBase"/>
</dbReference>
<dbReference type="GO" id="GO:0016922">
    <property type="term" value="F:nuclear receptor binding"/>
    <property type="evidence" value="ECO:0000353"/>
    <property type="project" value="FlyBase"/>
</dbReference>
<dbReference type="GO" id="GO:0000978">
    <property type="term" value="F:RNA polymerase II cis-regulatory region sequence-specific DNA binding"/>
    <property type="evidence" value="ECO:0000318"/>
    <property type="project" value="GO_Central"/>
</dbReference>
<dbReference type="GO" id="GO:0003713">
    <property type="term" value="F:transcription coactivator activity"/>
    <property type="evidence" value="ECO:0000316"/>
    <property type="project" value="FlyBase"/>
</dbReference>
<dbReference type="GO" id="GO:0008270">
    <property type="term" value="F:zinc ion binding"/>
    <property type="evidence" value="ECO:0007669"/>
    <property type="project" value="UniProtKB-KW"/>
</dbReference>
<dbReference type="GO" id="GO:0006338">
    <property type="term" value="P:chromatin remodeling"/>
    <property type="evidence" value="ECO:0000314"/>
    <property type="project" value="FlyBase"/>
</dbReference>
<dbReference type="GO" id="GO:0030097">
    <property type="term" value="P:hemopoiesis"/>
    <property type="evidence" value="ECO:0000315"/>
    <property type="project" value="FlyBase"/>
</dbReference>
<dbReference type="GO" id="GO:0045892">
    <property type="term" value="P:negative regulation of DNA-templated transcription"/>
    <property type="evidence" value="ECO:0000316"/>
    <property type="project" value="FlyBase"/>
</dbReference>
<dbReference type="GO" id="GO:0045824">
    <property type="term" value="P:negative regulation of innate immune response"/>
    <property type="evidence" value="ECO:0000315"/>
    <property type="project" value="FlyBase"/>
</dbReference>
<dbReference type="GO" id="GO:0046426">
    <property type="term" value="P:negative regulation of receptor signaling pathway via JAK-STAT"/>
    <property type="evidence" value="ECO:0000315"/>
    <property type="project" value="FlyBase"/>
</dbReference>
<dbReference type="GO" id="GO:0034728">
    <property type="term" value="P:nucleosome organization"/>
    <property type="evidence" value="ECO:0000314"/>
    <property type="project" value="FlyBase"/>
</dbReference>
<dbReference type="GO" id="GO:0045893">
    <property type="term" value="P:positive regulation of DNA-templated transcription"/>
    <property type="evidence" value="ECO:0000314"/>
    <property type="project" value="FlyBase"/>
</dbReference>
<dbReference type="GO" id="GO:0045944">
    <property type="term" value="P:positive regulation of transcription by RNA polymerase II"/>
    <property type="evidence" value="ECO:0000316"/>
    <property type="project" value="FlyBase"/>
</dbReference>
<dbReference type="GO" id="GO:0006355">
    <property type="term" value="P:regulation of DNA-templated transcription"/>
    <property type="evidence" value="ECO:0000315"/>
    <property type="project" value="FlyBase"/>
</dbReference>
<dbReference type="GO" id="GO:0010468">
    <property type="term" value="P:regulation of gene expression"/>
    <property type="evidence" value="ECO:0000315"/>
    <property type="project" value="FlyBase"/>
</dbReference>
<dbReference type="GO" id="GO:0006357">
    <property type="term" value="P:regulation of transcription by RNA polymerase II"/>
    <property type="evidence" value="ECO:0000315"/>
    <property type="project" value="FlyBase"/>
</dbReference>
<dbReference type="GO" id="GO:0048515">
    <property type="term" value="P:spermatid differentiation"/>
    <property type="evidence" value="ECO:0000315"/>
    <property type="project" value="FlyBase"/>
</dbReference>
<dbReference type="CDD" id="cd05509">
    <property type="entry name" value="Bromo_gcn5_like"/>
    <property type="match status" value="1"/>
</dbReference>
<dbReference type="CDD" id="cd15559">
    <property type="entry name" value="PHD1_BPTF"/>
    <property type="match status" value="1"/>
</dbReference>
<dbReference type="CDD" id="cd15560">
    <property type="entry name" value="PHD2_3_BPTF"/>
    <property type="match status" value="1"/>
</dbReference>
<dbReference type="FunFam" id="3.30.40.10:FF:000036">
    <property type="entry name" value="nucleosome-remodeling factor subunit BPTF isoform X1"/>
    <property type="match status" value="1"/>
</dbReference>
<dbReference type="FunFam" id="3.30.40.10:FF:000048">
    <property type="entry name" value="nucleosome-remodeling factor subunit BPTF isoform X1"/>
    <property type="match status" value="2"/>
</dbReference>
<dbReference type="Gene3D" id="1.20.920.10">
    <property type="entry name" value="Bromodomain-like"/>
    <property type="match status" value="1"/>
</dbReference>
<dbReference type="Gene3D" id="3.30.40.10">
    <property type="entry name" value="Zinc/RING finger domain, C3HC4 (zinc finger)"/>
    <property type="match status" value="3"/>
</dbReference>
<dbReference type="InterPro" id="IPR038028">
    <property type="entry name" value="BPTF"/>
</dbReference>
<dbReference type="InterPro" id="IPR001487">
    <property type="entry name" value="Bromodomain"/>
</dbReference>
<dbReference type="InterPro" id="IPR036427">
    <property type="entry name" value="Bromodomain-like_sf"/>
</dbReference>
<dbReference type="InterPro" id="IPR018359">
    <property type="entry name" value="Bromodomain_CS"/>
</dbReference>
<dbReference type="InterPro" id="IPR018501">
    <property type="entry name" value="DDT_dom"/>
</dbReference>
<dbReference type="InterPro" id="IPR028942">
    <property type="entry name" value="WHIM1_dom"/>
</dbReference>
<dbReference type="InterPro" id="IPR028941">
    <property type="entry name" value="WHIM2_dom"/>
</dbReference>
<dbReference type="InterPro" id="IPR019786">
    <property type="entry name" value="Zinc_finger_PHD-type_CS"/>
</dbReference>
<dbReference type="InterPro" id="IPR011011">
    <property type="entry name" value="Znf_FYVE_PHD"/>
</dbReference>
<dbReference type="InterPro" id="IPR001965">
    <property type="entry name" value="Znf_PHD"/>
</dbReference>
<dbReference type="InterPro" id="IPR019787">
    <property type="entry name" value="Znf_PHD-finger"/>
</dbReference>
<dbReference type="InterPro" id="IPR013083">
    <property type="entry name" value="Znf_RING/FYVE/PHD"/>
</dbReference>
<dbReference type="PANTHER" id="PTHR45975">
    <property type="entry name" value="NUCLEOSOME-REMODELING FACTOR SUBUNIT BPTF"/>
    <property type="match status" value="1"/>
</dbReference>
<dbReference type="PANTHER" id="PTHR45975:SF2">
    <property type="entry name" value="NUCLEOSOME-REMODELING FACTOR SUBUNIT BPTF"/>
    <property type="match status" value="1"/>
</dbReference>
<dbReference type="Pfam" id="PF00439">
    <property type="entry name" value="Bromodomain"/>
    <property type="match status" value="1"/>
</dbReference>
<dbReference type="Pfam" id="PF02791">
    <property type="entry name" value="DDT"/>
    <property type="match status" value="1"/>
</dbReference>
<dbReference type="Pfam" id="PF00628">
    <property type="entry name" value="PHD"/>
    <property type="match status" value="3"/>
</dbReference>
<dbReference type="Pfam" id="PF15612">
    <property type="entry name" value="WHIM1"/>
    <property type="match status" value="1"/>
</dbReference>
<dbReference type="Pfam" id="PF15613">
    <property type="entry name" value="WSD"/>
    <property type="match status" value="1"/>
</dbReference>
<dbReference type="PRINTS" id="PR00503">
    <property type="entry name" value="BROMODOMAIN"/>
</dbReference>
<dbReference type="SMART" id="SM00297">
    <property type="entry name" value="BROMO"/>
    <property type="match status" value="1"/>
</dbReference>
<dbReference type="SMART" id="SM00571">
    <property type="entry name" value="DDT"/>
    <property type="match status" value="1"/>
</dbReference>
<dbReference type="SMART" id="SM00249">
    <property type="entry name" value="PHD"/>
    <property type="match status" value="3"/>
</dbReference>
<dbReference type="SUPFAM" id="SSF47370">
    <property type="entry name" value="Bromodomain"/>
    <property type="match status" value="1"/>
</dbReference>
<dbReference type="SUPFAM" id="SSF57903">
    <property type="entry name" value="FYVE/PHD zinc finger"/>
    <property type="match status" value="3"/>
</dbReference>
<dbReference type="PROSITE" id="PS00633">
    <property type="entry name" value="BROMODOMAIN_1"/>
    <property type="match status" value="1"/>
</dbReference>
<dbReference type="PROSITE" id="PS50014">
    <property type="entry name" value="BROMODOMAIN_2"/>
    <property type="match status" value="1"/>
</dbReference>
<dbReference type="PROSITE" id="PS50827">
    <property type="entry name" value="DDT"/>
    <property type="match status" value="1"/>
</dbReference>
<dbReference type="PROSITE" id="PS01359">
    <property type="entry name" value="ZF_PHD_1"/>
    <property type="match status" value="3"/>
</dbReference>
<dbReference type="PROSITE" id="PS50016">
    <property type="entry name" value="ZF_PHD_2"/>
    <property type="match status" value="2"/>
</dbReference>
<accession>Q9W0T1</accession>
<accession>Q4V464</accession>
<accession>Q7KVD8</accession>
<accession>Q95VB8</accession>
<accession>Q960Y3</accession>
<accession>Q9W0T2</accession>
<keyword id="KW-0025">Alternative splicing</keyword>
<keyword id="KW-0103">Bromodomain</keyword>
<keyword id="KW-0156">Chromatin regulator</keyword>
<keyword id="KW-0175">Coiled coil</keyword>
<keyword id="KW-0217">Developmental protein</keyword>
<keyword id="KW-0903">Direct protein sequencing</keyword>
<keyword id="KW-0238">DNA-binding</keyword>
<keyword id="KW-0479">Metal-binding</keyword>
<keyword id="KW-0539">Nucleus</keyword>
<keyword id="KW-0597">Phosphoprotein</keyword>
<keyword id="KW-1185">Reference proteome</keyword>
<keyword id="KW-0677">Repeat</keyword>
<keyword id="KW-0804">Transcription</keyword>
<keyword id="KW-0805">Transcription regulation</keyword>
<keyword id="KW-0862">Zinc</keyword>
<keyword id="KW-0863">Zinc-finger</keyword>
<organism>
    <name type="scientific">Drosophila melanogaster</name>
    <name type="common">Fruit fly</name>
    <dbReference type="NCBI Taxonomy" id="7227"/>
    <lineage>
        <taxon>Eukaryota</taxon>
        <taxon>Metazoa</taxon>
        <taxon>Ecdysozoa</taxon>
        <taxon>Arthropoda</taxon>
        <taxon>Hexapoda</taxon>
        <taxon>Insecta</taxon>
        <taxon>Pterygota</taxon>
        <taxon>Neoptera</taxon>
        <taxon>Endopterygota</taxon>
        <taxon>Diptera</taxon>
        <taxon>Brachycera</taxon>
        <taxon>Muscomorpha</taxon>
        <taxon>Ephydroidea</taxon>
        <taxon>Drosophilidae</taxon>
        <taxon>Drosophila</taxon>
        <taxon>Sophophora</taxon>
    </lineage>
</organism>
<comment type="function">
    <text evidence="7 8 9 12">Histone-binding component of NURF (nucleosome remodeling factor), a complex which catalyzes ATP-dependent nucleosome sliding and facilitates transcription of chromatin. Specifically recognizes H3 tails trimethylated on 'Lys-4' (H3K4me3), which mark transcription start sites of virtually all active genes. Required for homeotic gene expression, proper larval blood cell development, normal male X chromosome morphology, ecdysteroid signaling and metamorphosis.</text>
</comment>
<comment type="subunit">
    <text evidence="7 10">Component of the NURF complex composed of Caf1-55, E(bx), Nurf-38 and Iswi. Interacts with Trl. Interacts with histone H3-K4Me3.</text>
</comment>
<comment type="subcellular location">
    <subcellularLocation>
        <location evidence="4">Nucleus</location>
    </subcellularLocation>
</comment>
<comment type="alternative products">
    <event type="alternative splicing"/>
    <isoform>
        <id>Q9W0T1-1</id>
        <name>A</name>
        <sequence type="displayed"/>
    </isoform>
    <isoform>
        <id>Q9W0T1-2</id>
        <name>B</name>
        <sequence type="described" ref="VSP_020422"/>
    </isoform>
    <isoform>
        <id>Q9W0T1-3</id>
        <name>C</name>
        <sequence type="described" ref="VSP_020423 VSP_020424"/>
    </isoform>
    <isoform>
        <id>Q9W0T1-4</id>
        <name>D</name>
        <sequence type="described" ref="VSP_020422 VSP_020423 VSP_020424"/>
    </isoform>
</comment>
<comment type="domain">
    <text>The second PHD-type zinc finger mediates binding to histone H3K4Me3.</text>
</comment>
<comment type="miscellaneous">
    <text>Highly susceptible to proteolysis.</text>
</comment>
<comment type="similarity">
    <text evidence="14">Belongs to the BPTF family.</text>
</comment>
<comment type="sequence caution" evidence="14">
    <conflict type="erroneous initiation">
        <sequence resource="EMBL-CDS" id="AAK93200"/>
    </conflict>
</comment>
<comment type="sequence caution" evidence="14">
    <conflict type="miscellaneous discrepancy">
        <sequence resource="EMBL-CDS" id="AAY51526"/>
    </conflict>
    <text>Contaminating sequence. Potential poly-A sequence.</text>
</comment>
<comment type="sequence caution" evidence="14">
    <conflict type="miscellaneous discrepancy">
        <sequence resource="EMBL-CDS" id="AAY55558"/>
    </conflict>
    <text>Contaminating sequence. Potential poly-A sequence.</text>
</comment>
<protein>
    <recommendedName>
        <fullName>Nucleosome-remodeling factor subunit NURF301</fullName>
    </recommendedName>
    <alternativeName>
        <fullName>Enhancer of bithorax</fullName>
    </alternativeName>
    <alternativeName>
        <fullName>Nucleosome-remodeling factor 215 kDa subunit</fullName>
        <shortName>NURF-215</shortName>
    </alternativeName>
</protein>
<evidence type="ECO:0000250" key="1"/>
<evidence type="ECO:0000255" key="2"/>
<evidence type="ECO:0000255" key="3">
    <source>
        <dbReference type="PROSITE-ProRule" id="PRU00035"/>
    </source>
</evidence>
<evidence type="ECO:0000255" key="4">
    <source>
        <dbReference type="PROSITE-ProRule" id="PRU00063"/>
    </source>
</evidence>
<evidence type="ECO:0000255" key="5">
    <source>
        <dbReference type="PROSITE-ProRule" id="PRU00146"/>
    </source>
</evidence>
<evidence type="ECO:0000256" key="6">
    <source>
        <dbReference type="SAM" id="MobiDB-lite"/>
    </source>
</evidence>
<evidence type="ECO:0000269" key="7">
    <source>
    </source>
</evidence>
<evidence type="ECO:0000269" key="8">
    <source>
    </source>
</evidence>
<evidence type="ECO:0000269" key="9">
    <source>
    </source>
</evidence>
<evidence type="ECO:0000269" key="10">
    <source>
    </source>
</evidence>
<evidence type="ECO:0000269" key="11">
    <source>
    </source>
</evidence>
<evidence type="ECO:0000269" key="12">
    <source>
    </source>
</evidence>
<evidence type="ECO:0000303" key="13">
    <source>
    </source>
</evidence>
<evidence type="ECO:0000305" key="14"/>